<gene>
    <name evidence="1" type="primary">ade</name>
    <name type="ordered locus">Pden_2836</name>
</gene>
<dbReference type="EC" id="3.5.4.2" evidence="1"/>
<dbReference type="EMBL" id="CP000490">
    <property type="protein sequence ID" value="ABL70920.1"/>
    <property type="molecule type" value="Genomic_DNA"/>
</dbReference>
<dbReference type="SMR" id="A1B5X6"/>
<dbReference type="STRING" id="318586.Pden_2836"/>
<dbReference type="EnsemblBacteria" id="ABL70920">
    <property type="protein sequence ID" value="ABL70920"/>
    <property type="gene ID" value="Pden_2836"/>
</dbReference>
<dbReference type="KEGG" id="pde:Pden_2836"/>
<dbReference type="eggNOG" id="COG1001">
    <property type="taxonomic scope" value="Bacteria"/>
</dbReference>
<dbReference type="HOGENOM" id="CLU_027935_0_0_5"/>
<dbReference type="Proteomes" id="UP000000361">
    <property type="component" value="Chromosome 2"/>
</dbReference>
<dbReference type="GO" id="GO:0000034">
    <property type="term" value="F:adenine deaminase activity"/>
    <property type="evidence" value="ECO:0007669"/>
    <property type="project" value="UniProtKB-UniRule"/>
</dbReference>
<dbReference type="GO" id="GO:0006146">
    <property type="term" value="P:adenine catabolic process"/>
    <property type="evidence" value="ECO:0007669"/>
    <property type="project" value="InterPro"/>
</dbReference>
<dbReference type="CDD" id="cd01295">
    <property type="entry name" value="AdeC"/>
    <property type="match status" value="1"/>
</dbReference>
<dbReference type="Gene3D" id="3.20.20.140">
    <property type="entry name" value="Metal-dependent hydrolases"/>
    <property type="match status" value="1"/>
</dbReference>
<dbReference type="Gene3D" id="2.30.40.10">
    <property type="entry name" value="Urease, subunit C, domain 1"/>
    <property type="match status" value="1"/>
</dbReference>
<dbReference type="HAMAP" id="MF_01518">
    <property type="entry name" value="Adenine_deamin"/>
    <property type="match status" value="1"/>
</dbReference>
<dbReference type="InterPro" id="IPR006679">
    <property type="entry name" value="Adenine_deam"/>
</dbReference>
<dbReference type="InterPro" id="IPR026912">
    <property type="entry name" value="Adenine_deam_C"/>
</dbReference>
<dbReference type="InterPro" id="IPR006680">
    <property type="entry name" value="Amidohydro-rel"/>
</dbReference>
<dbReference type="InterPro" id="IPR011059">
    <property type="entry name" value="Metal-dep_hydrolase_composite"/>
</dbReference>
<dbReference type="InterPro" id="IPR032466">
    <property type="entry name" value="Metal_Hydrolase"/>
</dbReference>
<dbReference type="NCBIfam" id="TIGR01178">
    <property type="entry name" value="ade"/>
    <property type="match status" value="1"/>
</dbReference>
<dbReference type="PANTHER" id="PTHR11113:SF2">
    <property type="entry name" value="ADENINE DEAMINASE"/>
    <property type="match status" value="1"/>
</dbReference>
<dbReference type="PANTHER" id="PTHR11113">
    <property type="entry name" value="N-ACETYLGLUCOSAMINE-6-PHOSPHATE DEACETYLASE"/>
    <property type="match status" value="1"/>
</dbReference>
<dbReference type="Pfam" id="PF13382">
    <property type="entry name" value="Adenine_deam_C"/>
    <property type="match status" value="1"/>
</dbReference>
<dbReference type="Pfam" id="PF01979">
    <property type="entry name" value="Amidohydro_1"/>
    <property type="match status" value="1"/>
</dbReference>
<dbReference type="SUPFAM" id="SSF51338">
    <property type="entry name" value="Composite domain of metallo-dependent hydrolases"/>
    <property type="match status" value="1"/>
</dbReference>
<dbReference type="SUPFAM" id="SSF51556">
    <property type="entry name" value="Metallo-dependent hydrolases"/>
    <property type="match status" value="1"/>
</dbReference>
<proteinExistence type="inferred from homology"/>
<protein>
    <recommendedName>
        <fullName evidence="1">Adenine deaminase</fullName>
        <shortName evidence="1">Adenase</shortName>
        <shortName evidence="1">Adenine aminase</shortName>
        <ecNumber evidence="1">3.5.4.2</ecNumber>
    </recommendedName>
</protein>
<evidence type="ECO:0000255" key="1">
    <source>
        <dbReference type="HAMAP-Rule" id="MF_01518"/>
    </source>
</evidence>
<comment type="catalytic activity">
    <reaction evidence="1">
        <text>adenine + H2O + H(+) = hypoxanthine + NH4(+)</text>
        <dbReference type="Rhea" id="RHEA:23688"/>
        <dbReference type="ChEBI" id="CHEBI:15377"/>
        <dbReference type="ChEBI" id="CHEBI:15378"/>
        <dbReference type="ChEBI" id="CHEBI:16708"/>
        <dbReference type="ChEBI" id="CHEBI:17368"/>
        <dbReference type="ChEBI" id="CHEBI:28938"/>
        <dbReference type="EC" id="3.5.4.2"/>
    </reaction>
</comment>
<comment type="cofactor">
    <cofactor evidence="1">
        <name>Mn(2+)</name>
        <dbReference type="ChEBI" id="CHEBI:29035"/>
    </cofactor>
</comment>
<comment type="similarity">
    <text evidence="1">Belongs to the metallo-dependent hydrolases superfamily. Adenine deaminase family.</text>
</comment>
<feature type="chain" id="PRO_0000292391" description="Adenine deaminase">
    <location>
        <begin position="1"/>
        <end position="597"/>
    </location>
</feature>
<sequence length="597" mass="62923">MNKETGMLKPWIEAQARLVEVAAGRAPADLVIRGGQWVNVHTREVIPGMDVAVADGRVAYVGPDAGPSVGPGTQVIEADGRFMVPGLIDAHMHVESGMLTPAGFAAAVIPHGTTTIFHDPHEIANVLGLEGVRLMRDESLLQPISMFTQMPSCAPSAPGLETTGQPITEGEVAQAMGWDGIVGLGEMMNFPGVASGDRQMLTEIAATRAAGKTVGGHYASPDLGRPFHAYVAGGANDDHETTTEAQGIARVRQGMGCMMRLGSAWYDVESQITAITEKGLDPRFFILCTDDSHSGTLVNDGHMNRVVRHAVDCGCDPLVAIQMATINAASHFGLERELGSITPGRRADVILTSDLRSLPIETVIAQGVVVAETGKLLVDCPRIAWPEAARDSVHLGRSLTGADFAVRATGDSARVRVIGVVENQAPTRALTAQLPIRDGVVEPQGETCHIALVERHRGTGGVVNGFVSGFGYQGRMAVASTVAHDSHHMIVVGTDRDSMAAAANHLGRIGGGVTVFRDGEELATVALPIAGLMSDRPAAEVAEAAQGIVKAMQDCGCTLNNAYMQHSLLALVVIPELRISDLGIVDVTRFELVDLMV</sequence>
<name>ADEC_PARDP</name>
<keyword id="KW-0378">Hydrolase</keyword>
<keyword id="KW-0464">Manganese</keyword>
<keyword id="KW-1185">Reference proteome</keyword>
<reference key="1">
    <citation type="submission" date="2006-12" db="EMBL/GenBank/DDBJ databases">
        <title>Complete sequence of chromosome 2 of Paracoccus denitrificans PD1222.</title>
        <authorList>
            <person name="Copeland A."/>
            <person name="Lucas S."/>
            <person name="Lapidus A."/>
            <person name="Barry K."/>
            <person name="Detter J.C."/>
            <person name="Glavina del Rio T."/>
            <person name="Hammon N."/>
            <person name="Israni S."/>
            <person name="Dalin E."/>
            <person name="Tice H."/>
            <person name="Pitluck S."/>
            <person name="Munk A.C."/>
            <person name="Brettin T."/>
            <person name="Bruce D."/>
            <person name="Han C."/>
            <person name="Tapia R."/>
            <person name="Gilna P."/>
            <person name="Schmutz J."/>
            <person name="Larimer F."/>
            <person name="Land M."/>
            <person name="Hauser L."/>
            <person name="Kyrpides N."/>
            <person name="Lykidis A."/>
            <person name="Spiro S."/>
            <person name="Richardson D.J."/>
            <person name="Moir J.W.B."/>
            <person name="Ferguson S.J."/>
            <person name="van Spanning R.J.M."/>
            <person name="Richardson P."/>
        </authorList>
    </citation>
    <scope>NUCLEOTIDE SEQUENCE [LARGE SCALE GENOMIC DNA]</scope>
    <source>
        <strain>Pd 1222</strain>
    </source>
</reference>
<accession>A1B5X6</accession>
<organism>
    <name type="scientific">Paracoccus denitrificans (strain Pd 1222)</name>
    <dbReference type="NCBI Taxonomy" id="318586"/>
    <lineage>
        <taxon>Bacteria</taxon>
        <taxon>Pseudomonadati</taxon>
        <taxon>Pseudomonadota</taxon>
        <taxon>Alphaproteobacteria</taxon>
        <taxon>Rhodobacterales</taxon>
        <taxon>Paracoccaceae</taxon>
        <taxon>Paracoccus</taxon>
    </lineage>
</organism>